<evidence type="ECO:0000255" key="1">
    <source>
        <dbReference type="HAMAP-Rule" id="MF_00294"/>
    </source>
</evidence>
<evidence type="ECO:0000305" key="2"/>
<dbReference type="EMBL" id="CP001600">
    <property type="protein sequence ID" value="ACR67317.1"/>
    <property type="molecule type" value="Genomic_DNA"/>
</dbReference>
<dbReference type="RefSeq" id="WP_005290066.1">
    <property type="nucleotide sequence ID" value="NZ_CP169062.1"/>
</dbReference>
<dbReference type="SMR" id="C5B9D7"/>
<dbReference type="STRING" id="67780.B6E78_11440"/>
<dbReference type="GeneID" id="93122525"/>
<dbReference type="KEGG" id="eic:NT01EI_0057"/>
<dbReference type="HOGENOM" id="CLU_190949_1_1_6"/>
<dbReference type="OrthoDB" id="21586at2"/>
<dbReference type="Proteomes" id="UP000001485">
    <property type="component" value="Chromosome"/>
</dbReference>
<dbReference type="GO" id="GO:0022625">
    <property type="term" value="C:cytosolic large ribosomal subunit"/>
    <property type="evidence" value="ECO:0007669"/>
    <property type="project" value="TreeGrafter"/>
</dbReference>
<dbReference type="GO" id="GO:0003735">
    <property type="term" value="F:structural constituent of ribosome"/>
    <property type="evidence" value="ECO:0007669"/>
    <property type="project" value="InterPro"/>
</dbReference>
<dbReference type="GO" id="GO:0006412">
    <property type="term" value="P:translation"/>
    <property type="evidence" value="ECO:0007669"/>
    <property type="project" value="UniProtKB-UniRule"/>
</dbReference>
<dbReference type="FunFam" id="2.20.28.120:FF:000001">
    <property type="entry name" value="50S ribosomal protein L33"/>
    <property type="match status" value="1"/>
</dbReference>
<dbReference type="Gene3D" id="2.20.28.120">
    <property type="entry name" value="Ribosomal protein L33"/>
    <property type="match status" value="1"/>
</dbReference>
<dbReference type="HAMAP" id="MF_00294">
    <property type="entry name" value="Ribosomal_bL33"/>
    <property type="match status" value="1"/>
</dbReference>
<dbReference type="InterPro" id="IPR001705">
    <property type="entry name" value="Ribosomal_bL33"/>
</dbReference>
<dbReference type="InterPro" id="IPR018264">
    <property type="entry name" value="Ribosomal_bL33_CS"/>
</dbReference>
<dbReference type="InterPro" id="IPR038584">
    <property type="entry name" value="Ribosomal_bL33_sf"/>
</dbReference>
<dbReference type="InterPro" id="IPR011332">
    <property type="entry name" value="Ribosomal_zn-bd"/>
</dbReference>
<dbReference type="NCBIfam" id="NF001860">
    <property type="entry name" value="PRK00595.1"/>
    <property type="match status" value="1"/>
</dbReference>
<dbReference type="NCBIfam" id="TIGR01023">
    <property type="entry name" value="rpmG_bact"/>
    <property type="match status" value="1"/>
</dbReference>
<dbReference type="PANTHER" id="PTHR15238">
    <property type="entry name" value="54S RIBOSOMAL PROTEIN L39, MITOCHONDRIAL"/>
    <property type="match status" value="1"/>
</dbReference>
<dbReference type="PANTHER" id="PTHR15238:SF1">
    <property type="entry name" value="LARGE RIBOSOMAL SUBUNIT PROTEIN BL33M"/>
    <property type="match status" value="1"/>
</dbReference>
<dbReference type="Pfam" id="PF00471">
    <property type="entry name" value="Ribosomal_L33"/>
    <property type="match status" value="1"/>
</dbReference>
<dbReference type="SUPFAM" id="SSF57829">
    <property type="entry name" value="Zn-binding ribosomal proteins"/>
    <property type="match status" value="1"/>
</dbReference>
<dbReference type="PROSITE" id="PS00582">
    <property type="entry name" value="RIBOSOMAL_L33"/>
    <property type="match status" value="1"/>
</dbReference>
<sequence>MAKGIREKIKLVSSAGTGHYYTTTKNKRTKPEKLELKKFDPVVRQHVIYKEAKIK</sequence>
<keyword id="KW-0687">Ribonucleoprotein</keyword>
<keyword id="KW-0689">Ribosomal protein</keyword>
<name>RL33_EDWI9</name>
<protein>
    <recommendedName>
        <fullName evidence="1">Large ribosomal subunit protein bL33</fullName>
    </recommendedName>
    <alternativeName>
        <fullName evidence="2">50S ribosomal protein L33</fullName>
    </alternativeName>
</protein>
<gene>
    <name evidence="1" type="primary">rpmG</name>
    <name type="ordered locus">NT01EI_0057</name>
</gene>
<proteinExistence type="inferred from homology"/>
<accession>C5B9D7</accession>
<feature type="chain" id="PRO_1000204909" description="Large ribosomal subunit protein bL33">
    <location>
        <begin position="1"/>
        <end position="55"/>
    </location>
</feature>
<comment type="similarity">
    <text evidence="1">Belongs to the bacterial ribosomal protein bL33 family.</text>
</comment>
<reference key="1">
    <citation type="submission" date="2009-03" db="EMBL/GenBank/DDBJ databases">
        <title>Complete genome sequence of Edwardsiella ictaluri 93-146.</title>
        <authorList>
            <person name="Williams M.L."/>
            <person name="Gillaspy A.F."/>
            <person name="Dyer D.W."/>
            <person name="Thune R.L."/>
            <person name="Waldbieser G.C."/>
            <person name="Schuster S.C."/>
            <person name="Gipson J."/>
            <person name="Zaitshik J."/>
            <person name="Landry C."/>
            <person name="Lawrence M.L."/>
        </authorList>
    </citation>
    <scope>NUCLEOTIDE SEQUENCE [LARGE SCALE GENOMIC DNA]</scope>
    <source>
        <strain>93-146</strain>
    </source>
</reference>
<organism>
    <name type="scientific">Edwardsiella ictaluri (strain 93-146)</name>
    <dbReference type="NCBI Taxonomy" id="634503"/>
    <lineage>
        <taxon>Bacteria</taxon>
        <taxon>Pseudomonadati</taxon>
        <taxon>Pseudomonadota</taxon>
        <taxon>Gammaproteobacteria</taxon>
        <taxon>Enterobacterales</taxon>
        <taxon>Hafniaceae</taxon>
        <taxon>Edwardsiella</taxon>
    </lineage>
</organism>